<organism>
    <name type="scientific">Campylobacter jejuni subsp. doylei (strain ATCC BAA-1458 / RM4099 / 269.97)</name>
    <dbReference type="NCBI Taxonomy" id="360109"/>
    <lineage>
        <taxon>Bacteria</taxon>
        <taxon>Pseudomonadati</taxon>
        <taxon>Campylobacterota</taxon>
        <taxon>Epsilonproteobacteria</taxon>
        <taxon>Campylobacterales</taxon>
        <taxon>Campylobacteraceae</taxon>
        <taxon>Campylobacter</taxon>
    </lineage>
</organism>
<evidence type="ECO:0000255" key="1">
    <source>
        <dbReference type="HAMAP-Rule" id="MF_00141"/>
    </source>
</evidence>
<gene>
    <name evidence="1" type="primary">efp</name>
    <name type="ordered locus">JJD26997_1379</name>
</gene>
<name>EFP_CAMJD</name>
<feature type="chain" id="PRO_1000010709" description="Elongation factor P">
    <location>
        <begin position="1"/>
        <end position="189"/>
    </location>
</feature>
<reference key="1">
    <citation type="submission" date="2007-07" db="EMBL/GenBank/DDBJ databases">
        <title>Complete genome sequence of Campylobacter jejuni subsp doylei 269.97 isolated from human blood.</title>
        <authorList>
            <person name="Fouts D.E."/>
            <person name="Mongodin E.F."/>
            <person name="Puiu D."/>
            <person name="Sebastian Y."/>
            <person name="Miller W.G."/>
            <person name="Mandrell R.E."/>
            <person name="Lastovica A.J."/>
            <person name="Nelson K.E."/>
        </authorList>
    </citation>
    <scope>NUCLEOTIDE SEQUENCE [LARGE SCALE GENOMIC DNA]</scope>
    <source>
        <strain>ATCC BAA-1458 / RM4099 / 269.97</strain>
    </source>
</reference>
<accession>A7H4J1</accession>
<keyword id="KW-0963">Cytoplasm</keyword>
<keyword id="KW-0251">Elongation factor</keyword>
<keyword id="KW-0648">Protein biosynthesis</keyword>
<sequence length="189" mass="21098">MASYSMGDLKKGLKIEIDGIPFKIVEYQHVKPGKGPAFVRIKIKSFIDGKVLEKTFHAGDKCEAPNLEDKTMQYLYDDGENCQFMDTQTYEQVAISDDDVGEAKKWMLDGMMVDVLFHNGKAIGVEVPQVVELKIIETAPNFKGDTQGSNKKPATLETGAVVQIPFHVLEGEVIRVDTVRGEYIERANK</sequence>
<proteinExistence type="inferred from homology"/>
<protein>
    <recommendedName>
        <fullName evidence="1">Elongation factor P</fullName>
        <shortName evidence="1">EF-P</shortName>
    </recommendedName>
</protein>
<comment type="function">
    <text evidence="1">Involved in peptide bond synthesis. Stimulates efficient translation and peptide-bond synthesis on native or reconstituted 70S ribosomes in vitro. Probably functions indirectly by altering the affinity of the ribosome for aminoacyl-tRNA, thus increasing their reactivity as acceptors for peptidyl transferase.</text>
</comment>
<comment type="pathway">
    <text evidence="1">Protein biosynthesis; polypeptide chain elongation.</text>
</comment>
<comment type="subcellular location">
    <subcellularLocation>
        <location evidence="1">Cytoplasm</location>
    </subcellularLocation>
</comment>
<comment type="similarity">
    <text evidence="1">Belongs to the elongation factor P family.</text>
</comment>
<dbReference type="EMBL" id="CP000768">
    <property type="protein sequence ID" value="ABS43662.1"/>
    <property type="molecule type" value="Genomic_DNA"/>
</dbReference>
<dbReference type="SMR" id="A7H4J1"/>
<dbReference type="KEGG" id="cjd:JJD26997_1379"/>
<dbReference type="HOGENOM" id="CLU_074944_0_1_7"/>
<dbReference type="UniPathway" id="UPA00345"/>
<dbReference type="Proteomes" id="UP000002302">
    <property type="component" value="Chromosome"/>
</dbReference>
<dbReference type="GO" id="GO:0005737">
    <property type="term" value="C:cytoplasm"/>
    <property type="evidence" value="ECO:0007669"/>
    <property type="project" value="UniProtKB-SubCell"/>
</dbReference>
<dbReference type="GO" id="GO:0003746">
    <property type="term" value="F:translation elongation factor activity"/>
    <property type="evidence" value="ECO:0007669"/>
    <property type="project" value="UniProtKB-UniRule"/>
</dbReference>
<dbReference type="GO" id="GO:0043043">
    <property type="term" value="P:peptide biosynthetic process"/>
    <property type="evidence" value="ECO:0007669"/>
    <property type="project" value="InterPro"/>
</dbReference>
<dbReference type="CDD" id="cd04470">
    <property type="entry name" value="S1_EF-P_repeat_1"/>
    <property type="match status" value="1"/>
</dbReference>
<dbReference type="CDD" id="cd05794">
    <property type="entry name" value="S1_EF-P_repeat_2"/>
    <property type="match status" value="1"/>
</dbReference>
<dbReference type="FunFam" id="2.30.30.30:FF:000003">
    <property type="entry name" value="Elongation factor P"/>
    <property type="match status" value="1"/>
</dbReference>
<dbReference type="FunFam" id="2.40.50.140:FF:000004">
    <property type="entry name" value="Elongation factor P"/>
    <property type="match status" value="1"/>
</dbReference>
<dbReference type="FunFam" id="2.40.50.140:FF:000009">
    <property type="entry name" value="Elongation factor P"/>
    <property type="match status" value="1"/>
</dbReference>
<dbReference type="Gene3D" id="2.30.30.30">
    <property type="match status" value="1"/>
</dbReference>
<dbReference type="Gene3D" id="2.40.50.140">
    <property type="entry name" value="Nucleic acid-binding proteins"/>
    <property type="match status" value="2"/>
</dbReference>
<dbReference type="HAMAP" id="MF_00141">
    <property type="entry name" value="EF_P"/>
    <property type="match status" value="1"/>
</dbReference>
<dbReference type="InterPro" id="IPR015365">
    <property type="entry name" value="Elong-fact-P_C"/>
</dbReference>
<dbReference type="InterPro" id="IPR012340">
    <property type="entry name" value="NA-bd_OB-fold"/>
</dbReference>
<dbReference type="InterPro" id="IPR014722">
    <property type="entry name" value="Rib_uL2_dom2"/>
</dbReference>
<dbReference type="InterPro" id="IPR020599">
    <property type="entry name" value="Transl_elong_fac_P/YeiP"/>
</dbReference>
<dbReference type="InterPro" id="IPR013185">
    <property type="entry name" value="Transl_elong_KOW-like"/>
</dbReference>
<dbReference type="InterPro" id="IPR001059">
    <property type="entry name" value="Transl_elong_P/YeiP_cen"/>
</dbReference>
<dbReference type="InterPro" id="IPR011768">
    <property type="entry name" value="Transl_elongation_fac_P"/>
</dbReference>
<dbReference type="InterPro" id="IPR008991">
    <property type="entry name" value="Translation_prot_SH3-like_sf"/>
</dbReference>
<dbReference type="NCBIfam" id="TIGR00038">
    <property type="entry name" value="efp"/>
    <property type="match status" value="1"/>
</dbReference>
<dbReference type="NCBIfam" id="NF001810">
    <property type="entry name" value="PRK00529.1"/>
    <property type="match status" value="1"/>
</dbReference>
<dbReference type="PANTHER" id="PTHR30053">
    <property type="entry name" value="ELONGATION FACTOR P"/>
    <property type="match status" value="1"/>
</dbReference>
<dbReference type="PANTHER" id="PTHR30053:SF12">
    <property type="entry name" value="ELONGATION FACTOR P (EF-P) FAMILY PROTEIN"/>
    <property type="match status" value="1"/>
</dbReference>
<dbReference type="Pfam" id="PF01132">
    <property type="entry name" value="EFP"/>
    <property type="match status" value="1"/>
</dbReference>
<dbReference type="Pfam" id="PF08207">
    <property type="entry name" value="EFP_N"/>
    <property type="match status" value="1"/>
</dbReference>
<dbReference type="Pfam" id="PF09285">
    <property type="entry name" value="Elong-fact-P_C"/>
    <property type="match status" value="1"/>
</dbReference>
<dbReference type="PIRSF" id="PIRSF005901">
    <property type="entry name" value="EF-P"/>
    <property type="match status" value="1"/>
</dbReference>
<dbReference type="SMART" id="SM01185">
    <property type="entry name" value="EFP"/>
    <property type="match status" value="1"/>
</dbReference>
<dbReference type="SMART" id="SM00841">
    <property type="entry name" value="Elong-fact-P_C"/>
    <property type="match status" value="1"/>
</dbReference>
<dbReference type="SUPFAM" id="SSF50249">
    <property type="entry name" value="Nucleic acid-binding proteins"/>
    <property type="match status" value="2"/>
</dbReference>
<dbReference type="SUPFAM" id="SSF50104">
    <property type="entry name" value="Translation proteins SH3-like domain"/>
    <property type="match status" value="1"/>
</dbReference>